<gene>
    <name evidence="1" type="primary">tusA</name>
    <name type="ordered locus">SO_0019</name>
</gene>
<keyword id="KW-0963">Cytoplasm</keyword>
<keyword id="KW-1185">Reference proteome</keyword>
<dbReference type="EMBL" id="AE014299">
    <property type="protein sequence ID" value="AAN53106.1"/>
    <property type="molecule type" value="Genomic_DNA"/>
</dbReference>
<dbReference type="RefSeq" id="NP_715661.1">
    <property type="nucleotide sequence ID" value="NC_004347.2"/>
</dbReference>
<dbReference type="RefSeq" id="WP_011070435.1">
    <property type="nucleotide sequence ID" value="NC_004347.2"/>
</dbReference>
<dbReference type="SMR" id="Q8EKS1"/>
<dbReference type="STRING" id="211586.SO_0019"/>
<dbReference type="PaxDb" id="211586-SO_0019"/>
<dbReference type="KEGG" id="son:SO_0019"/>
<dbReference type="PATRIC" id="fig|211586.12.peg.19"/>
<dbReference type="eggNOG" id="COG0425">
    <property type="taxonomic scope" value="Bacteria"/>
</dbReference>
<dbReference type="HOGENOM" id="CLU_165255_5_0_6"/>
<dbReference type="OrthoDB" id="9797352at2"/>
<dbReference type="PhylomeDB" id="Q8EKS1"/>
<dbReference type="BioCyc" id="SONE211586:G1GMP-19-MONOMER"/>
<dbReference type="Proteomes" id="UP000008186">
    <property type="component" value="Chromosome"/>
</dbReference>
<dbReference type="GO" id="GO:0005737">
    <property type="term" value="C:cytoplasm"/>
    <property type="evidence" value="ECO:0007669"/>
    <property type="project" value="UniProtKB-SubCell"/>
</dbReference>
<dbReference type="GO" id="GO:0097163">
    <property type="term" value="F:sulfur carrier activity"/>
    <property type="evidence" value="ECO:0007669"/>
    <property type="project" value="UniProtKB-UniRule"/>
</dbReference>
<dbReference type="GO" id="GO:0002143">
    <property type="term" value="P:tRNA wobble position uridine thiolation"/>
    <property type="evidence" value="ECO:0007669"/>
    <property type="project" value="InterPro"/>
</dbReference>
<dbReference type="CDD" id="cd03423">
    <property type="entry name" value="SirA"/>
    <property type="match status" value="1"/>
</dbReference>
<dbReference type="Gene3D" id="3.30.110.40">
    <property type="entry name" value="TusA-like domain"/>
    <property type="match status" value="1"/>
</dbReference>
<dbReference type="HAMAP" id="MF_00413">
    <property type="entry name" value="Thiourid_synth_A"/>
    <property type="match status" value="1"/>
</dbReference>
<dbReference type="InterPro" id="IPR022931">
    <property type="entry name" value="Sulphur_carrier_TusA"/>
</dbReference>
<dbReference type="InterPro" id="IPR001455">
    <property type="entry name" value="TusA-like"/>
</dbReference>
<dbReference type="InterPro" id="IPR036868">
    <property type="entry name" value="TusA-like_sf"/>
</dbReference>
<dbReference type="NCBIfam" id="NF001423">
    <property type="entry name" value="PRK00299.1"/>
    <property type="match status" value="1"/>
</dbReference>
<dbReference type="PANTHER" id="PTHR33279:SF2">
    <property type="entry name" value="SULFUR CARRIER PROTEIN TUSA"/>
    <property type="match status" value="1"/>
</dbReference>
<dbReference type="PANTHER" id="PTHR33279">
    <property type="entry name" value="SULFUR CARRIER PROTEIN YEDF-RELATED"/>
    <property type="match status" value="1"/>
</dbReference>
<dbReference type="Pfam" id="PF01206">
    <property type="entry name" value="TusA"/>
    <property type="match status" value="1"/>
</dbReference>
<dbReference type="SUPFAM" id="SSF64307">
    <property type="entry name" value="SirA-like"/>
    <property type="match status" value="1"/>
</dbReference>
<dbReference type="PROSITE" id="PS01148">
    <property type="entry name" value="UPF0033"/>
    <property type="match status" value="1"/>
</dbReference>
<proteinExistence type="inferred from homology"/>
<reference key="1">
    <citation type="journal article" date="2002" name="Nat. Biotechnol.">
        <title>Genome sequence of the dissimilatory metal ion-reducing bacterium Shewanella oneidensis.</title>
        <authorList>
            <person name="Heidelberg J.F."/>
            <person name="Paulsen I.T."/>
            <person name="Nelson K.E."/>
            <person name="Gaidos E.J."/>
            <person name="Nelson W.C."/>
            <person name="Read T.D."/>
            <person name="Eisen J.A."/>
            <person name="Seshadri R."/>
            <person name="Ward N.L."/>
            <person name="Methe B.A."/>
            <person name="Clayton R.A."/>
            <person name="Meyer T."/>
            <person name="Tsapin A."/>
            <person name="Scott J."/>
            <person name="Beanan M.J."/>
            <person name="Brinkac L.M."/>
            <person name="Daugherty S.C."/>
            <person name="DeBoy R.T."/>
            <person name="Dodson R.J."/>
            <person name="Durkin A.S."/>
            <person name="Haft D.H."/>
            <person name="Kolonay J.F."/>
            <person name="Madupu R."/>
            <person name="Peterson J.D."/>
            <person name="Umayam L.A."/>
            <person name="White O."/>
            <person name="Wolf A.M."/>
            <person name="Vamathevan J.J."/>
            <person name="Weidman J.F."/>
            <person name="Impraim M."/>
            <person name="Lee K."/>
            <person name="Berry K.J."/>
            <person name="Lee C."/>
            <person name="Mueller J."/>
            <person name="Khouri H.M."/>
            <person name="Gill J."/>
            <person name="Utterback T.R."/>
            <person name="McDonald L.A."/>
            <person name="Feldblyum T.V."/>
            <person name="Smith H.O."/>
            <person name="Venter J.C."/>
            <person name="Nealson K.H."/>
            <person name="Fraser C.M."/>
        </authorList>
    </citation>
    <scope>NUCLEOTIDE SEQUENCE [LARGE SCALE GENOMIC DNA]</scope>
    <source>
        <strain>ATCC 700550 / JCM 31522 / CIP 106686 / LMG 19005 / NCIMB 14063 / MR-1</strain>
    </source>
</reference>
<protein>
    <recommendedName>
        <fullName evidence="1">Sulfur carrier protein TusA</fullName>
    </recommendedName>
</protein>
<evidence type="ECO:0000255" key="1">
    <source>
        <dbReference type="HAMAP-Rule" id="MF_00413"/>
    </source>
</evidence>
<accession>Q8EKS1</accession>
<organism>
    <name type="scientific">Shewanella oneidensis (strain ATCC 700550 / JCM 31522 / CIP 106686 / LMG 19005 / NCIMB 14063 / MR-1)</name>
    <dbReference type="NCBI Taxonomy" id="211586"/>
    <lineage>
        <taxon>Bacteria</taxon>
        <taxon>Pseudomonadati</taxon>
        <taxon>Pseudomonadota</taxon>
        <taxon>Gammaproteobacteria</taxon>
        <taxon>Alteromonadales</taxon>
        <taxon>Shewanellaceae</taxon>
        <taxon>Shewanella</taxon>
    </lineage>
</organism>
<sequence>MNDVFSTAQHKLDALGLRCPEPVMMVRKTVRQMAQGETLLIIADDPATTRDIPSFCEFMDHTLIASETMQTPYQYLIKKGL</sequence>
<feature type="chain" id="PRO_0000159053" description="Sulfur carrier protein TusA">
    <location>
        <begin position="1"/>
        <end position="81"/>
    </location>
</feature>
<feature type="active site" description="Cysteine persulfide intermediate" evidence="1">
    <location>
        <position position="19"/>
    </location>
</feature>
<name>TUSA_SHEON</name>
<comment type="function">
    <text evidence="1">Sulfur carrier protein which probably makes part of a sulfur-relay system.</text>
</comment>
<comment type="subcellular location">
    <subcellularLocation>
        <location evidence="1">Cytoplasm</location>
    </subcellularLocation>
</comment>
<comment type="similarity">
    <text evidence="1">Belongs to the sulfur carrier protein TusA family.</text>
</comment>